<protein>
    <recommendedName>
        <fullName evidence="1">ATP synthase subunit delta</fullName>
    </recommendedName>
    <alternativeName>
        <fullName evidence="1">ATP synthase F(1) sector subunit delta</fullName>
    </alternativeName>
    <alternativeName>
        <fullName evidence="1">F-type ATPase subunit delta</fullName>
        <shortName evidence="1">F-ATPase subunit delta</shortName>
    </alternativeName>
</protein>
<organism>
    <name type="scientific">Cupriavidus necator (strain ATCC 17699 / DSM 428 / KCTC 22496 / NCIMB 10442 / H16 / Stanier 337)</name>
    <name type="common">Ralstonia eutropha</name>
    <dbReference type="NCBI Taxonomy" id="381666"/>
    <lineage>
        <taxon>Bacteria</taxon>
        <taxon>Pseudomonadati</taxon>
        <taxon>Pseudomonadota</taxon>
        <taxon>Betaproteobacteria</taxon>
        <taxon>Burkholderiales</taxon>
        <taxon>Burkholderiaceae</taxon>
        <taxon>Cupriavidus</taxon>
    </lineage>
</organism>
<evidence type="ECO:0000255" key="1">
    <source>
        <dbReference type="HAMAP-Rule" id="MF_01416"/>
    </source>
</evidence>
<feature type="chain" id="PRO_0000371086" description="ATP synthase subunit delta">
    <location>
        <begin position="1"/>
        <end position="180"/>
    </location>
</feature>
<name>ATPD_CUPNH</name>
<dbReference type="EMBL" id="AM260479">
    <property type="protein sequence ID" value="CAJ94697.1"/>
    <property type="molecule type" value="Genomic_DNA"/>
</dbReference>
<dbReference type="RefSeq" id="WP_010811266.1">
    <property type="nucleotide sequence ID" value="NZ_CP039287.1"/>
</dbReference>
<dbReference type="SMR" id="Q0K5M4"/>
<dbReference type="STRING" id="381666.H16_A3640"/>
<dbReference type="KEGG" id="reh:H16_A3640"/>
<dbReference type="eggNOG" id="COG0712">
    <property type="taxonomic scope" value="Bacteria"/>
</dbReference>
<dbReference type="HOGENOM" id="CLU_085114_3_0_4"/>
<dbReference type="OrthoDB" id="9816221at2"/>
<dbReference type="Proteomes" id="UP000008210">
    <property type="component" value="Chromosome 1"/>
</dbReference>
<dbReference type="GO" id="GO:0005886">
    <property type="term" value="C:plasma membrane"/>
    <property type="evidence" value="ECO:0007669"/>
    <property type="project" value="UniProtKB-SubCell"/>
</dbReference>
<dbReference type="GO" id="GO:0045259">
    <property type="term" value="C:proton-transporting ATP synthase complex"/>
    <property type="evidence" value="ECO:0007669"/>
    <property type="project" value="UniProtKB-KW"/>
</dbReference>
<dbReference type="GO" id="GO:0046933">
    <property type="term" value="F:proton-transporting ATP synthase activity, rotational mechanism"/>
    <property type="evidence" value="ECO:0007669"/>
    <property type="project" value="UniProtKB-UniRule"/>
</dbReference>
<dbReference type="Gene3D" id="1.10.520.20">
    <property type="entry name" value="N-terminal domain of the delta subunit of the F1F0-ATP synthase"/>
    <property type="match status" value="1"/>
</dbReference>
<dbReference type="HAMAP" id="MF_01416">
    <property type="entry name" value="ATP_synth_delta_bact"/>
    <property type="match status" value="1"/>
</dbReference>
<dbReference type="InterPro" id="IPR026015">
    <property type="entry name" value="ATP_synth_OSCP/delta_N_sf"/>
</dbReference>
<dbReference type="InterPro" id="IPR000711">
    <property type="entry name" value="ATPase_OSCP/dsu"/>
</dbReference>
<dbReference type="NCBIfam" id="TIGR01145">
    <property type="entry name" value="ATP_synt_delta"/>
    <property type="match status" value="1"/>
</dbReference>
<dbReference type="NCBIfam" id="NF004402">
    <property type="entry name" value="PRK05758.2-2"/>
    <property type="match status" value="1"/>
</dbReference>
<dbReference type="PANTHER" id="PTHR11910">
    <property type="entry name" value="ATP SYNTHASE DELTA CHAIN"/>
    <property type="match status" value="1"/>
</dbReference>
<dbReference type="Pfam" id="PF00213">
    <property type="entry name" value="OSCP"/>
    <property type="match status" value="1"/>
</dbReference>
<dbReference type="PRINTS" id="PR00125">
    <property type="entry name" value="ATPASEDELTA"/>
</dbReference>
<dbReference type="SUPFAM" id="SSF47928">
    <property type="entry name" value="N-terminal domain of the delta subunit of the F1F0-ATP synthase"/>
    <property type="match status" value="1"/>
</dbReference>
<reference key="1">
    <citation type="journal article" date="2006" name="Nat. Biotechnol.">
        <title>Genome sequence of the bioplastic-producing 'Knallgas' bacterium Ralstonia eutropha H16.</title>
        <authorList>
            <person name="Pohlmann A."/>
            <person name="Fricke W.F."/>
            <person name="Reinecke F."/>
            <person name="Kusian B."/>
            <person name="Liesegang H."/>
            <person name="Cramm R."/>
            <person name="Eitinger T."/>
            <person name="Ewering C."/>
            <person name="Poetter M."/>
            <person name="Schwartz E."/>
            <person name="Strittmatter A."/>
            <person name="Voss I."/>
            <person name="Gottschalk G."/>
            <person name="Steinbuechel A."/>
            <person name="Friedrich B."/>
            <person name="Bowien B."/>
        </authorList>
    </citation>
    <scope>NUCLEOTIDE SEQUENCE [LARGE SCALE GENOMIC DNA]</scope>
    <source>
        <strain>ATCC 17699 / DSM 428 / KCTC 22496 / NCIMB 10442 / H16 / Stanier 337</strain>
    </source>
</reference>
<keyword id="KW-0066">ATP synthesis</keyword>
<keyword id="KW-0997">Cell inner membrane</keyword>
<keyword id="KW-1003">Cell membrane</keyword>
<keyword id="KW-0139">CF(1)</keyword>
<keyword id="KW-0375">Hydrogen ion transport</keyword>
<keyword id="KW-0406">Ion transport</keyword>
<keyword id="KW-0472">Membrane</keyword>
<keyword id="KW-1185">Reference proteome</keyword>
<keyword id="KW-0813">Transport</keyword>
<gene>
    <name evidence="1" type="primary">atpH</name>
    <name type="ordered locus">H16_A3640</name>
</gene>
<sequence length="180" mass="19157">MAETATIARPYAEALFRVASESSAGNLGAWSELVSEMGQVAANPDMKAVAGDPNVPGDKLAELFLSVLKSPLNDEARRFVKLLVDNGRLTVMPEIAEQFHVLKNAREGSSDVEITSAFPLEGSQLNDLVAALERKFGRKLYAQVAVDPSLIGGVSVKVGDEVLDTSVRSRLAAMQATLTA</sequence>
<comment type="function">
    <text evidence="1">F(1)F(0) ATP synthase produces ATP from ADP in the presence of a proton or sodium gradient. F-type ATPases consist of two structural domains, F(1) containing the extramembraneous catalytic core and F(0) containing the membrane proton channel, linked together by a central stalk and a peripheral stalk. During catalysis, ATP synthesis in the catalytic domain of F(1) is coupled via a rotary mechanism of the central stalk subunits to proton translocation.</text>
</comment>
<comment type="function">
    <text evidence="1">This protein is part of the stalk that links CF(0) to CF(1). It either transmits conformational changes from CF(0) to CF(1) or is implicated in proton conduction.</text>
</comment>
<comment type="subunit">
    <text evidence="1">F-type ATPases have 2 components, F(1) - the catalytic core - and F(0) - the membrane proton channel. F(1) has five subunits: alpha(3), beta(3), gamma(1), delta(1), epsilon(1). F(0) has three main subunits: a(1), b(2) and c(10-14). The alpha and beta chains form an alternating ring which encloses part of the gamma chain. F(1) is attached to F(0) by a central stalk formed by the gamma and epsilon chains, while a peripheral stalk is formed by the delta and b chains.</text>
</comment>
<comment type="subcellular location">
    <subcellularLocation>
        <location evidence="1">Cell inner membrane</location>
        <topology evidence="1">Peripheral membrane protein</topology>
    </subcellularLocation>
</comment>
<comment type="similarity">
    <text evidence="1">Belongs to the ATPase delta chain family.</text>
</comment>
<proteinExistence type="inferred from homology"/>
<accession>Q0K5M4</accession>